<proteinExistence type="evidence at protein level"/>
<evidence type="ECO:0000255" key="1">
    <source>
        <dbReference type="PROSITE-ProRule" id="PRU01210"/>
    </source>
</evidence>
<evidence type="ECO:0000269" key="2">
    <source>
    </source>
</evidence>
<evidence type="ECO:0000303" key="3">
    <source>
    </source>
</evidence>
<evidence type="ECO:0000305" key="4"/>
<evidence type="ECO:0000305" key="5">
    <source>
    </source>
</evidence>
<sequence length="63" mass="6982">ARDGYPVDEKGCKLSCLINDKWCNSACHSRGGKYGYCYTGGLACYCEAVPDNVKVWTYETNTC</sequence>
<accession>P58296</accession>
<reference key="1">
    <citation type="journal article" date="2002" name="J. Exp. Biol.">
        <title>Cn11, the first example of a scorpion toxin that is a true blocker of Na(+) currents in crayfish neurons.</title>
        <authorList>
            <person name="Ramirez-Dominguez M.E."/>
            <person name="Olamendi-Portugal T."/>
            <person name="Garcia U."/>
            <person name="Garcia C."/>
            <person name="Arechiga H."/>
            <person name="Possani L.D."/>
        </authorList>
    </citation>
    <scope>PROTEIN SEQUENCE</scope>
    <scope>FUNCTION</scope>
    <scope>SUBCELLULAR LOCATION</scope>
    <source>
        <tissue>Venom</tissue>
    </source>
</reference>
<feature type="chain" id="PRO_0000066771" description="Toxin Cn11" evidence="2">
    <location>
        <begin position="1"/>
        <end position="63"/>
    </location>
</feature>
<feature type="domain" description="LCN-type CS-alpha/beta" evidence="1">
    <location>
        <begin position="2"/>
        <end position="63"/>
    </location>
</feature>
<feature type="disulfide bond" evidence="1">
    <location>
        <begin position="12"/>
        <end position="63"/>
    </location>
</feature>
<feature type="disulfide bond" evidence="1">
    <location>
        <begin position="16"/>
        <end position="37"/>
    </location>
</feature>
<feature type="disulfide bond" evidence="1">
    <location>
        <begin position="23"/>
        <end position="44"/>
    </location>
</feature>
<feature type="disulfide bond" evidence="1">
    <location>
        <begin position="27"/>
        <end position="46"/>
    </location>
</feature>
<protein>
    <recommendedName>
        <fullName evidence="3">Toxin Cn11</fullName>
    </recommendedName>
</protein>
<dbReference type="SMR" id="P58296"/>
<dbReference type="GO" id="GO:0005576">
    <property type="term" value="C:extracellular region"/>
    <property type="evidence" value="ECO:0007669"/>
    <property type="project" value="UniProtKB-SubCell"/>
</dbReference>
<dbReference type="GO" id="GO:0019871">
    <property type="term" value="F:sodium channel inhibitor activity"/>
    <property type="evidence" value="ECO:0007669"/>
    <property type="project" value="InterPro"/>
</dbReference>
<dbReference type="GO" id="GO:0090729">
    <property type="term" value="F:toxin activity"/>
    <property type="evidence" value="ECO:0007669"/>
    <property type="project" value="UniProtKB-KW"/>
</dbReference>
<dbReference type="GO" id="GO:0006952">
    <property type="term" value="P:defense response"/>
    <property type="evidence" value="ECO:0007669"/>
    <property type="project" value="InterPro"/>
</dbReference>
<dbReference type="CDD" id="cd23106">
    <property type="entry name" value="neurotoxins_LC_scorpion"/>
    <property type="match status" value="1"/>
</dbReference>
<dbReference type="FunFam" id="3.30.30.10:FF:000002">
    <property type="entry name" value="Alpha-like toxin BmK-M1"/>
    <property type="match status" value="1"/>
</dbReference>
<dbReference type="Gene3D" id="3.30.30.10">
    <property type="entry name" value="Knottin, scorpion toxin-like"/>
    <property type="match status" value="1"/>
</dbReference>
<dbReference type="InterPro" id="IPR044062">
    <property type="entry name" value="LCN-type_CS_alpha_beta_dom"/>
</dbReference>
<dbReference type="InterPro" id="IPR003614">
    <property type="entry name" value="Scorpion_toxin-like"/>
</dbReference>
<dbReference type="InterPro" id="IPR036574">
    <property type="entry name" value="Scorpion_toxin-like_sf"/>
</dbReference>
<dbReference type="InterPro" id="IPR018218">
    <property type="entry name" value="Scorpion_toxinL"/>
</dbReference>
<dbReference type="InterPro" id="IPR002061">
    <property type="entry name" value="Scorpion_toxinL/defensin"/>
</dbReference>
<dbReference type="Pfam" id="PF00537">
    <property type="entry name" value="Toxin_3"/>
    <property type="match status" value="1"/>
</dbReference>
<dbReference type="PRINTS" id="PR00285">
    <property type="entry name" value="SCORPNTOXIN"/>
</dbReference>
<dbReference type="SMART" id="SM00505">
    <property type="entry name" value="Knot1"/>
    <property type="match status" value="1"/>
</dbReference>
<dbReference type="SUPFAM" id="SSF57095">
    <property type="entry name" value="Scorpion toxin-like"/>
    <property type="match status" value="1"/>
</dbReference>
<dbReference type="PROSITE" id="PS51863">
    <property type="entry name" value="LCN_CSAB"/>
    <property type="match status" value="1"/>
</dbReference>
<organism>
    <name type="scientific">Centruroides noxius</name>
    <name type="common">Mexican scorpion</name>
    <dbReference type="NCBI Taxonomy" id="6878"/>
    <lineage>
        <taxon>Eukaryota</taxon>
        <taxon>Metazoa</taxon>
        <taxon>Ecdysozoa</taxon>
        <taxon>Arthropoda</taxon>
        <taxon>Chelicerata</taxon>
        <taxon>Arachnida</taxon>
        <taxon>Scorpiones</taxon>
        <taxon>Buthida</taxon>
        <taxon>Buthoidea</taxon>
        <taxon>Buthidae</taxon>
        <taxon>Centruroides</taxon>
    </lineage>
</organism>
<keyword id="KW-0903">Direct protein sequencing</keyword>
<keyword id="KW-1015">Disulfide bond</keyword>
<keyword id="KW-0872">Ion channel impairing toxin</keyword>
<keyword id="KW-0528">Neurotoxin</keyword>
<keyword id="KW-0964">Secreted</keyword>
<keyword id="KW-0800">Toxin</keyword>
<keyword id="KW-0738">Voltage-gated sodium channel impairing toxin</keyword>
<name>SCXB_CENNO</name>
<comment type="function">
    <text evidence="2">First blocker of sodium channels (Nav) found in scorpions. Is lethal to crustaceans (Cambarellus montezumae), less toxic to insects (crickets) and non-toxic to mammals (mice) at the doses assayed.</text>
</comment>
<comment type="subcellular location">
    <subcellularLocation>
        <location evidence="2">Secreted</location>
    </subcellularLocation>
</comment>
<comment type="tissue specificity">
    <text evidence="5">Expressed by the venom gland.</text>
</comment>
<comment type="domain">
    <text evidence="4">Has the structural arrangement of an alpha-helix connected to antiparallel beta-sheets by disulfide bonds (CS-alpha/beta).</text>
</comment>
<comment type="similarity">
    <text evidence="4">Belongs to the long (4 C-C) scorpion toxin superfamily. Sodium channel inhibitor family.</text>
</comment>